<gene>
    <name evidence="5 8" type="primary">serB1</name>
    <name type="ordered locus">Rv0505c</name>
    <name type="ORF">MTCY20G9.32c</name>
</gene>
<sequence length="308" mass="32673">MMVSSHLGSPDQAGHVDLASPADPPPPDASASHSPVDMPAPVAAAGSDRQPPIDLTAAAFFDVDNTLVQGSSAVHFGRGLAARHYFTYRDVLGFLYAQAKFQLLGKENSNDVAAGRRKALAFIEGRSVAELVALGEEIYDEIIADKIWDGTRELTQMHLDAGQQVWLITATPYELAATIARRLGLTGALGTVAESVDGIFTGRLVGEILHGTGKAHAVRSLAIREGLNLKRCTAYSDSYNDVPMLSLVGTAVAINPDARLRSLARERGWEIRDFRIARKAARIGVPSALALGAAGGALAALASRRQSR</sequence>
<keyword id="KW-1003">Cell membrane</keyword>
<keyword id="KW-0378">Hydrolase</keyword>
<keyword id="KW-0460">Magnesium</keyword>
<keyword id="KW-0472">Membrane</keyword>
<keyword id="KW-0479">Metal-binding</keyword>
<keyword id="KW-1185">Reference proteome</keyword>
<keyword id="KW-0812">Transmembrane</keyword>
<keyword id="KW-1133">Transmembrane helix</keyword>
<proteinExistence type="evidence at protein level"/>
<reference key="1">
    <citation type="journal article" date="1998" name="Nature">
        <title>Deciphering the biology of Mycobacterium tuberculosis from the complete genome sequence.</title>
        <authorList>
            <person name="Cole S.T."/>
            <person name="Brosch R."/>
            <person name="Parkhill J."/>
            <person name="Garnier T."/>
            <person name="Churcher C.M."/>
            <person name="Harris D.E."/>
            <person name="Gordon S.V."/>
            <person name="Eiglmeier K."/>
            <person name="Gas S."/>
            <person name="Barry C.E. III"/>
            <person name="Tekaia F."/>
            <person name="Badcock K."/>
            <person name="Basham D."/>
            <person name="Brown D."/>
            <person name="Chillingworth T."/>
            <person name="Connor R."/>
            <person name="Davies R.M."/>
            <person name="Devlin K."/>
            <person name="Feltwell T."/>
            <person name="Gentles S."/>
            <person name="Hamlin N."/>
            <person name="Holroyd S."/>
            <person name="Hornsby T."/>
            <person name="Jagels K."/>
            <person name="Krogh A."/>
            <person name="McLean J."/>
            <person name="Moule S."/>
            <person name="Murphy L.D."/>
            <person name="Oliver S."/>
            <person name="Osborne J."/>
            <person name="Quail M.A."/>
            <person name="Rajandream M.A."/>
            <person name="Rogers J."/>
            <person name="Rutter S."/>
            <person name="Seeger K."/>
            <person name="Skelton S."/>
            <person name="Squares S."/>
            <person name="Squares R."/>
            <person name="Sulston J.E."/>
            <person name="Taylor K."/>
            <person name="Whitehead S."/>
            <person name="Barrell B.G."/>
        </authorList>
    </citation>
    <scope>NUCLEOTIDE SEQUENCE [LARGE SCALE GENOMIC DNA]</scope>
    <source>
        <strain>ATCC 25618 / H37Rv</strain>
    </source>
</reference>
<reference key="2">
    <citation type="journal article" date="2003" name="Mol. Microbiol.">
        <title>Genes required for mycobacterial growth defined by high density mutagenesis.</title>
        <authorList>
            <person name="Sassetti C.M."/>
            <person name="Boyd D.H."/>
            <person name="Rubin E.J."/>
        </authorList>
    </citation>
    <scope>DISRUPTION PHENOTYPE</scope>
    <source>
        <strain>H37Rv</strain>
    </source>
</reference>
<reference key="3">
    <citation type="journal article" date="2011" name="Mol. Cell. Proteomics">
        <title>Proteogenomic analysis of Mycobacterium tuberculosis by high resolution mass spectrometry.</title>
        <authorList>
            <person name="Kelkar D.S."/>
            <person name="Kumar D."/>
            <person name="Kumar P."/>
            <person name="Balakrishnan L."/>
            <person name="Muthusamy B."/>
            <person name="Yadav A.K."/>
            <person name="Shrivastava P."/>
            <person name="Marimuthu A."/>
            <person name="Anand S."/>
            <person name="Sundaram H."/>
            <person name="Kingsbury R."/>
            <person name="Harsha H.C."/>
            <person name="Nair B."/>
            <person name="Prasad T.S."/>
            <person name="Chauhan D.S."/>
            <person name="Katoch K."/>
            <person name="Katoch V.M."/>
            <person name="Kumar P."/>
            <person name="Chaerkady R."/>
            <person name="Ramachandran S."/>
            <person name="Dash D."/>
            <person name="Pandey A."/>
        </authorList>
    </citation>
    <scope>IDENTIFICATION BY MASS SPECTROMETRY [LARGE SCALE ANALYSIS]</scope>
    <source>
        <strain>ATCC 25618 / H37Rv</strain>
    </source>
</reference>
<reference key="4">
    <citation type="journal article" date="2014" name="J. Biol. Chem.">
        <title>High throughput screen identifies small molecule inhibitors specific for Mycobacterium tuberculosis phosphoserine phosphatase.</title>
        <authorList>
            <person name="Arora G."/>
            <person name="Tiwari P."/>
            <person name="Mandal R.S."/>
            <person name="Gupta A."/>
            <person name="Sharma D."/>
            <person name="Saha S."/>
            <person name="Singh R."/>
        </authorList>
    </citation>
    <scope>FUNCTION</scope>
    <scope>3D-STRUCTURE MODELING</scope>
    <source>
        <strain>ATCC 27294 / TMC 102 / H37Rv</strain>
    </source>
</reference>
<name>SERB1_MYCTU</name>
<dbReference type="EC" id="3.1.3.3" evidence="7"/>
<dbReference type="EMBL" id="AL123456">
    <property type="protein sequence ID" value="CCP43242.1"/>
    <property type="status" value="ALT_INIT"/>
    <property type="molecule type" value="Genomic_DNA"/>
</dbReference>
<dbReference type="RefSeq" id="WP_003402684.1">
    <property type="nucleotide sequence ID" value="NC_000962.3"/>
</dbReference>
<dbReference type="RefSeq" id="YP_177732.1">
    <property type="nucleotide sequence ID" value="NC_000962.3"/>
</dbReference>
<dbReference type="SMR" id="P9WGJ3"/>
<dbReference type="STRING" id="83332.Rv0505c"/>
<dbReference type="PaxDb" id="83332-Rv0505c"/>
<dbReference type="DNASU" id="887270"/>
<dbReference type="GeneID" id="887270"/>
<dbReference type="KEGG" id="mtu:Rv0505c"/>
<dbReference type="PATRIC" id="fig|83332.12.peg.560"/>
<dbReference type="TubercuList" id="Rv0505c"/>
<dbReference type="eggNOG" id="COG0560">
    <property type="taxonomic scope" value="Bacteria"/>
</dbReference>
<dbReference type="InParanoid" id="P9WGJ3"/>
<dbReference type="OrthoDB" id="25607at2"/>
<dbReference type="Proteomes" id="UP000001584">
    <property type="component" value="Chromosome"/>
</dbReference>
<dbReference type="GO" id="GO:0005886">
    <property type="term" value="C:plasma membrane"/>
    <property type="evidence" value="ECO:0007005"/>
    <property type="project" value="MTBBASE"/>
</dbReference>
<dbReference type="GO" id="GO:0036424">
    <property type="term" value="F:L-phosphoserine phosphatase activity"/>
    <property type="evidence" value="ECO:0007669"/>
    <property type="project" value="RHEA"/>
</dbReference>
<dbReference type="GO" id="GO:0046872">
    <property type="term" value="F:metal ion binding"/>
    <property type="evidence" value="ECO:0007669"/>
    <property type="project" value="UniProtKB-KW"/>
</dbReference>
<dbReference type="CDD" id="cd02612">
    <property type="entry name" value="HAD_PGPPase"/>
    <property type="match status" value="1"/>
</dbReference>
<dbReference type="FunFam" id="3.40.50.1000:FF:000025">
    <property type="entry name" value="HAD hydrolase, family IB"/>
    <property type="match status" value="1"/>
</dbReference>
<dbReference type="Gene3D" id="3.40.50.1000">
    <property type="entry name" value="HAD superfamily/HAD-like"/>
    <property type="match status" value="1"/>
</dbReference>
<dbReference type="Gene3D" id="1.20.1440.100">
    <property type="entry name" value="SG protein - dephosphorylation function"/>
    <property type="match status" value="1"/>
</dbReference>
<dbReference type="InterPro" id="IPR050582">
    <property type="entry name" value="HAD-like_SerB"/>
</dbReference>
<dbReference type="InterPro" id="IPR036412">
    <property type="entry name" value="HAD-like_sf"/>
</dbReference>
<dbReference type="InterPro" id="IPR006385">
    <property type="entry name" value="HAD_hydro_SerB1"/>
</dbReference>
<dbReference type="InterPro" id="IPR023214">
    <property type="entry name" value="HAD_sf"/>
</dbReference>
<dbReference type="NCBIfam" id="TIGR01488">
    <property type="entry name" value="HAD-SF-IB"/>
    <property type="match status" value="1"/>
</dbReference>
<dbReference type="NCBIfam" id="TIGR01490">
    <property type="entry name" value="HAD-SF-IB-hyp1"/>
    <property type="match status" value="1"/>
</dbReference>
<dbReference type="PANTHER" id="PTHR43344">
    <property type="entry name" value="PHOSPHOSERINE PHOSPHATASE"/>
    <property type="match status" value="1"/>
</dbReference>
<dbReference type="PANTHER" id="PTHR43344:SF15">
    <property type="entry name" value="PHOSPHOSERINE PHOSPHATASE SERB1"/>
    <property type="match status" value="1"/>
</dbReference>
<dbReference type="Pfam" id="PF12710">
    <property type="entry name" value="HAD"/>
    <property type="match status" value="1"/>
</dbReference>
<dbReference type="SUPFAM" id="SSF56784">
    <property type="entry name" value="HAD-like"/>
    <property type="match status" value="1"/>
</dbReference>
<comment type="function">
    <text evidence="7">Likely catalyzes the dephosphorylation of O-phospho-L-serine into L-serine.</text>
</comment>
<comment type="catalytic activity">
    <reaction evidence="7">
        <text>O-phospho-L-serine + H2O = L-serine + phosphate</text>
        <dbReference type="Rhea" id="RHEA:21208"/>
        <dbReference type="ChEBI" id="CHEBI:15377"/>
        <dbReference type="ChEBI" id="CHEBI:33384"/>
        <dbReference type="ChEBI" id="CHEBI:43474"/>
        <dbReference type="ChEBI" id="CHEBI:57524"/>
        <dbReference type="EC" id="3.1.3.3"/>
    </reaction>
</comment>
<comment type="catalytic activity">
    <reaction evidence="7">
        <text>O-phospho-D-serine + H2O = D-serine + phosphate</text>
        <dbReference type="Rhea" id="RHEA:24873"/>
        <dbReference type="ChEBI" id="CHEBI:15377"/>
        <dbReference type="ChEBI" id="CHEBI:35247"/>
        <dbReference type="ChEBI" id="CHEBI:43474"/>
        <dbReference type="ChEBI" id="CHEBI:58680"/>
        <dbReference type="EC" id="3.1.3.3"/>
    </reaction>
</comment>
<comment type="cofactor">
    <cofactor evidence="1">
        <name>Mg(2+)</name>
        <dbReference type="ChEBI" id="CHEBI:18420"/>
    </cofactor>
    <text evidence="1">Binds 1 Mg(2+) ion per subunit.</text>
</comment>
<comment type="subcellular location">
    <subcellularLocation>
        <location evidence="2">Cell membrane</location>
        <topology evidence="2">Single-pass membrane protein</topology>
    </subcellularLocation>
</comment>
<comment type="disruption phenotype">
    <text evidence="4">Transposon mutagenesis experiments have identified that SerB2 is essential for the pathogen's viability while SerB1 is not.</text>
</comment>
<comment type="similarity">
    <text evidence="6">Belongs to the HAD-like hydrolase superfamily. SerB family.</text>
</comment>
<comment type="sequence caution" evidence="6">
    <conflict type="erroneous initiation">
        <sequence resource="EMBL-CDS" id="CCP43242"/>
    </conflict>
    <text>Extended N-terminus.</text>
</comment>
<protein>
    <recommendedName>
        <fullName evidence="5">Phosphoserine phosphatase SerB1</fullName>
        <shortName evidence="5">PSP</shortName>
        <shortName>PSPase</shortName>
        <ecNumber evidence="7">3.1.3.3</ecNumber>
    </recommendedName>
    <alternativeName>
        <fullName>O-phosphoserine phosphohydrolase</fullName>
    </alternativeName>
</protein>
<accession>P9WGJ3</accession>
<accession>L0T6W2</accession>
<accession>P66801</accession>
<accession>Q11169</accession>
<feature type="chain" id="PRO_0000156893" description="Phosphoserine phosphatase SerB1">
    <location>
        <begin position="1"/>
        <end position="308"/>
    </location>
</feature>
<feature type="transmembrane region" description="Helical" evidence="2">
    <location>
        <begin position="280"/>
        <end position="302"/>
    </location>
</feature>
<feature type="region of interest" description="Disordered" evidence="3">
    <location>
        <begin position="1"/>
        <end position="48"/>
    </location>
</feature>
<feature type="active site" description="Nucleophile" evidence="1">
    <location>
        <position position="62"/>
    </location>
</feature>
<feature type="active site" description="Proton donor" evidence="1">
    <location>
        <position position="64"/>
    </location>
</feature>
<feature type="binding site" evidence="1">
    <location>
        <position position="62"/>
    </location>
    <ligand>
        <name>Mg(2+)</name>
        <dbReference type="ChEBI" id="CHEBI:18420"/>
    </ligand>
</feature>
<feature type="binding site" evidence="1">
    <location>
        <position position="64"/>
    </location>
    <ligand>
        <name>Mg(2+)</name>
        <dbReference type="ChEBI" id="CHEBI:18420"/>
    </ligand>
</feature>
<feature type="binding site" evidence="1">
    <location>
        <position position="90"/>
    </location>
    <ligand>
        <name>substrate</name>
    </ligand>
</feature>
<feature type="binding site" evidence="1">
    <location>
        <position position="126"/>
    </location>
    <ligand>
        <name>substrate</name>
    </ligand>
</feature>
<feature type="binding site" evidence="1">
    <location>
        <begin position="169"/>
        <end position="170"/>
    </location>
    <ligand>
        <name>substrate</name>
    </ligand>
</feature>
<feature type="binding site" evidence="1">
    <location>
        <position position="214"/>
    </location>
    <ligand>
        <name>substrate</name>
    </ligand>
</feature>
<feature type="binding site" evidence="1">
    <location>
        <position position="237"/>
    </location>
    <ligand>
        <name>Mg(2+)</name>
        <dbReference type="ChEBI" id="CHEBI:18420"/>
    </ligand>
</feature>
<feature type="binding site" evidence="1">
    <location>
        <position position="240"/>
    </location>
    <ligand>
        <name>substrate</name>
    </ligand>
</feature>
<evidence type="ECO:0000250" key="1">
    <source>
        <dbReference type="UniProtKB" id="Q58989"/>
    </source>
</evidence>
<evidence type="ECO:0000255" key="2"/>
<evidence type="ECO:0000256" key="3">
    <source>
        <dbReference type="SAM" id="MobiDB-lite"/>
    </source>
</evidence>
<evidence type="ECO:0000269" key="4">
    <source>
    </source>
</evidence>
<evidence type="ECO:0000303" key="5">
    <source>
    </source>
</evidence>
<evidence type="ECO:0000305" key="6"/>
<evidence type="ECO:0000305" key="7">
    <source>
    </source>
</evidence>
<evidence type="ECO:0000312" key="8">
    <source>
        <dbReference type="EMBL" id="CCP43242.1"/>
    </source>
</evidence>
<organism>
    <name type="scientific">Mycobacterium tuberculosis (strain ATCC 25618 / H37Rv)</name>
    <dbReference type="NCBI Taxonomy" id="83332"/>
    <lineage>
        <taxon>Bacteria</taxon>
        <taxon>Bacillati</taxon>
        <taxon>Actinomycetota</taxon>
        <taxon>Actinomycetes</taxon>
        <taxon>Mycobacteriales</taxon>
        <taxon>Mycobacteriaceae</taxon>
        <taxon>Mycobacterium</taxon>
        <taxon>Mycobacterium tuberculosis complex</taxon>
    </lineage>
</organism>